<feature type="chain" id="PRO_0000093618" description="Synergistic-type venom protein S2C4" evidence="2">
    <location>
        <begin position="1"/>
        <end position="62"/>
    </location>
</feature>
<feature type="disulfide bond" evidence="1">
    <location>
        <begin position="3"/>
        <end position="24"/>
    </location>
</feature>
<feature type="disulfide bond" evidence="1">
    <location>
        <begin position="17"/>
        <end position="42"/>
    </location>
</feature>
<feature type="disulfide bond" evidence="1">
    <location>
        <begin position="46"/>
        <end position="57"/>
    </location>
</feature>
<feature type="disulfide bond" description="Interchain" evidence="1">
    <location>
        <position position="54"/>
    </location>
</feature>
<accession>P01407</accession>
<dbReference type="PIR" id="A01678">
    <property type="entry name" value="V6EP2J"/>
</dbReference>
<dbReference type="SMR" id="P01407"/>
<dbReference type="GO" id="GO:0005576">
    <property type="term" value="C:extracellular region"/>
    <property type="evidence" value="ECO:0007669"/>
    <property type="project" value="UniProtKB-SubCell"/>
</dbReference>
<dbReference type="GO" id="GO:0090729">
    <property type="term" value="F:toxin activity"/>
    <property type="evidence" value="ECO:0007669"/>
    <property type="project" value="UniProtKB-KW"/>
</dbReference>
<dbReference type="CDD" id="cd00206">
    <property type="entry name" value="TFP_snake_toxin"/>
    <property type="match status" value="1"/>
</dbReference>
<dbReference type="Gene3D" id="2.10.60.10">
    <property type="entry name" value="CD59"/>
    <property type="match status" value="1"/>
</dbReference>
<dbReference type="InterPro" id="IPR003571">
    <property type="entry name" value="Snake_3FTx"/>
</dbReference>
<dbReference type="InterPro" id="IPR045860">
    <property type="entry name" value="Snake_toxin-like_sf"/>
</dbReference>
<dbReference type="InterPro" id="IPR018354">
    <property type="entry name" value="Snake_toxin_con_site"/>
</dbReference>
<dbReference type="InterPro" id="IPR054131">
    <property type="entry name" value="Toxin_cobra-type"/>
</dbReference>
<dbReference type="Pfam" id="PF21947">
    <property type="entry name" value="Toxin_cobra-type"/>
    <property type="match status" value="1"/>
</dbReference>
<dbReference type="SUPFAM" id="SSF57302">
    <property type="entry name" value="Snake toxin-like"/>
    <property type="match status" value="1"/>
</dbReference>
<dbReference type="PROSITE" id="PS00272">
    <property type="entry name" value="SNAKE_TOXIN"/>
    <property type="match status" value="1"/>
</dbReference>
<evidence type="ECO:0000250" key="1">
    <source>
        <dbReference type="UniProtKB" id="P0DQP2"/>
    </source>
</evidence>
<evidence type="ECO:0000269" key="2">
    <source>
    </source>
</evidence>
<evidence type="ECO:0000303" key="3">
    <source>
    </source>
</evidence>
<evidence type="ECO:0000305" key="4"/>
<evidence type="ECO:0000305" key="5">
    <source>
    </source>
</evidence>
<proteinExistence type="evidence at protein level"/>
<reference key="1">
    <citation type="journal article" date="1979" name="Hoppe-Seyler's Z. Physiol. Chem.">
        <title>Snake venoms. The amino-acid sequence of protein S2C4 from Dendroaspis jamesoni kaimosae (Jameson's mamba) venom.</title>
        <authorList>
            <person name="Joubert F.J."/>
            <person name="Taljaard N."/>
        </authorList>
    </citation>
    <scope>PROTEIN SEQUENCE</scope>
    <scope>SUBCELLULAR LOCATION</scope>
    <source>
        <tissue>Venom</tissue>
    </source>
</reference>
<sequence>LTCVTDKSFGGVNTEECAAGQKICFKNWKKMGPKLYDVKRGCTATCPKADDDGCVKCCNTDK</sequence>
<organism>
    <name type="scientific">Dendroaspis jamesoni kaimosae</name>
    <name type="common">Eastern Jameson's mamba</name>
    <dbReference type="NCBI Taxonomy" id="8619"/>
    <lineage>
        <taxon>Eukaryota</taxon>
        <taxon>Metazoa</taxon>
        <taxon>Chordata</taxon>
        <taxon>Craniata</taxon>
        <taxon>Vertebrata</taxon>
        <taxon>Euteleostomi</taxon>
        <taxon>Lepidosauria</taxon>
        <taxon>Squamata</taxon>
        <taxon>Bifurcata</taxon>
        <taxon>Unidentata</taxon>
        <taxon>Episquamata</taxon>
        <taxon>Toxicofera</taxon>
        <taxon>Serpentes</taxon>
        <taxon>Colubroidea</taxon>
        <taxon>Elapidae</taxon>
        <taxon>Elapinae</taxon>
        <taxon>Dendroaspis</taxon>
    </lineage>
</organism>
<keyword id="KW-0903">Direct protein sequencing</keyword>
<keyword id="KW-1015">Disulfide bond</keyword>
<keyword id="KW-0964">Secreted</keyword>
<keyword id="KW-0800">Toxin</keyword>
<name>3SIY_DENJA</name>
<comment type="function">
    <text evidence="2">This protein shows a synergetic toxic effect in that it enhances the toxicity of other toxins.</text>
</comment>
<comment type="subunit">
    <text evidence="1">Homodimer; disulfide-linked.</text>
</comment>
<comment type="subcellular location">
    <subcellularLocation>
        <location evidence="2">Secreted</location>
    </subcellularLocation>
</comment>
<comment type="tissue specificity">
    <text evidence="5">Expressed by the venom gland.</text>
</comment>
<comment type="miscellaneous">
    <text evidence="4">Is classified as a P-type cytotoxin, since a proline residue stands at position 33 (Pro-31 in standard classification).</text>
</comment>
<comment type="similarity">
    <text evidence="4">Belongs to the three-finger toxin family. Short-chain subfamily. Aminergic toxin sub-subfamily.</text>
</comment>
<protein>
    <recommendedName>
        <fullName evidence="3">Synergistic-type venom protein S2C4</fullName>
    </recommendedName>
</protein>